<feature type="chain" id="PRO_1000017222" description="5-methyltetrahydropteroyltriglutamate--homocysteine methyltransferase">
    <location>
        <begin position="1"/>
        <end position="762"/>
    </location>
</feature>
<feature type="active site" description="Proton donor" evidence="1">
    <location>
        <position position="698"/>
    </location>
</feature>
<feature type="binding site" evidence="1">
    <location>
        <begin position="17"/>
        <end position="20"/>
    </location>
    <ligand>
        <name>5-methyltetrahydropteroyltri-L-glutamate</name>
        <dbReference type="ChEBI" id="CHEBI:58207"/>
    </ligand>
</feature>
<feature type="binding site" evidence="1">
    <location>
        <position position="111"/>
    </location>
    <ligand>
        <name>5-methyltetrahydropteroyltri-L-glutamate</name>
        <dbReference type="ChEBI" id="CHEBI:58207"/>
    </ligand>
</feature>
<feature type="binding site" evidence="1">
    <location>
        <begin position="435"/>
        <end position="437"/>
    </location>
    <ligand>
        <name>L-homocysteine</name>
        <dbReference type="ChEBI" id="CHEBI:58199"/>
    </ligand>
</feature>
<feature type="binding site" evidence="1">
    <location>
        <begin position="435"/>
        <end position="437"/>
    </location>
    <ligand>
        <name>L-methionine</name>
        <dbReference type="ChEBI" id="CHEBI:57844"/>
    </ligand>
</feature>
<feature type="binding site" evidence="1">
    <location>
        <position position="488"/>
    </location>
    <ligand>
        <name>L-homocysteine</name>
        <dbReference type="ChEBI" id="CHEBI:58199"/>
    </ligand>
</feature>
<feature type="binding site" evidence="1">
    <location>
        <position position="488"/>
    </location>
    <ligand>
        <name>L-methionine</name>
        <dbReference type="ChEBI" id="CHEBI:57844"/>
    </ligand>
</feature>
<feature type="binding site" evidence="1">
    <location>
        <begin position="519"/>
        <end position="520"/>
    </location>
    <ligand>
        <name>5-methyltetrahydropteroyltri-L-glutamate</name>
        <dbReference type="ChEBI" id="CHEBI:58207"/>
    </ligand>
</feature>
<feature type="binding site" evidence="1">
    <location>
        <position position="565"/>
    </location>
    <ligand>
        <name>5-methyltetrahydropteroyltri-L-glutamate</name>
        <dbReference type="ChEBI" id="CHEBI:58207"/>
    </ligand>
</feature>
<feature type="binding site" evidence="1">
    <location>
        <position position="603"/>
    </location>
    <ligand>
        <name>L-homocysteine</name>
        <dbReference type="ChEBI" id="CHEBI:58199"/>
    </ligand>
</feature>
<feature type="binding site" evidence="1">
    <location>
        <position position="603"/>
    </location>
    <ligand>
        <name>L-methionine</name>
        <dbReference type="ChEBI" id="CHEBI:57844"/>
    </ligand>
</feature>
<feature type="binding site" evidence="1">
    <location>
        <position position="609"/>
    </location>
    <ligand>
        <name>5-methyltetrahydropteroyltri-L-glutamate</name>
        <dbReference type="ChEBI" id="CHEBI:58207"/>
    </ligand>
</feature>
<feature type="binding site" evidence="1">
    <location>
        <position position="645"/>
    </location>
    <ligand>
        <name>Zn(2+)</name>
        <dbReference type="ChEBI" id="CHEBI:29105"/>
        <note>catalytic</note>
    </ligand>
</feature>
<feature type="binding site" evidence="1">
    <location>
        <position position="647"/>
    </location>
    <ligand>
        <name>Zn(2+)</name>
        <dbReference type="ChEBI" id="CHEBI:29105"/>
        <note>catalytic</note>
    </ligand>
</feature>
<feature type="binding site" evidence="1">
    <location>
        <position position="669"/>
    </location>
    <ligand>
        <name>Zn(2+)</name>
        <dbReference type="ChEBI" id="CHEBI:29105"/>
        <note>catalytic</note>
    </ligand>
</feature>
<feature type="binding site" evidence="1">
    <location>
        <position position="730"/>
    </location>
    <ligand>
        <name>Zn(2+)</name>
        <dbReference type="ChEBI" id="CHEBI:29105"/>
        <note>catalytic</note>
    </ligand>
</feature>
<gene>
    <name evidence="1" type="primary">metE</name>
    <name type="ordered locus">BT9727_3744</name>
</gene>
<sequence>MAIQTSNLGYPRIGLQREWKKTLEAFWSNKINEEQFLTTMKEIRLQHVKVQQEKGIELIPIGDFTYYDHVLDTAYMLGFIPSRFSEFTSYLDVYFAMARGSKDHVASEMTKWFNTNYHYIVPEYEEGLQISLKDNRPLRLYEEAKQELGVDGKPVILGPYTFLKLAKGYTQEQFATILKQLVAPYVQLLSELHAAGAQIIQVDEPIFASLTKEEVQQAKEIYEAIRKEVPNATLLLQTYFDSVEENYEEFITFPVSSIGLDFVHGKEGNLNAISKYGFPADKTLAVGCIDGRNIWRADLDEVLTLFTTLQKQVQTKDLIVQPSCSLLHTPIDKTEETHLSTELFDALAFANQKLEELVLIHSALTQGTESISNELETYRNVHHTIRSSAARNREDVKAARTALKEEDFSRPLPFEKRYELQQVALKLPLLPTTTIGSFPQTTEVRQTRKEWRNGIISNEQYEQFIEKETEKWIRYQEEIGLDVLVHGEFERTDMVEYFSERLAGFSFTKNGWVQSYGSRCVKPPVIYGDVAFINGMTIKETVYAQSLTEKVVKGMLTGPVTILNWSFVRNDIPRKEVSYQIALALRHEIELLESSGIRVIQVDEPALREGMPLKEKDWDAYITWAVQSFLLATSSVANETQIHTHMCYSNFEDIVDAIRALDADVISIETSRSHGEFIDTLKHTTYEKGIGLGVYDIHSPRVPSKDEMYKIVEQSLQVCDPKYFWINPDCGLKTRRTEEVIPALEHMVQAAKDARSLLKTNA</sequence>
<organism>
    <name type="scientific">Bacillus thuringiensis subsp. konkukian (strain 97-27)</name>
    <dbReference type="NCBI Taxonomy" id="281309"/>
    <lineage>
        <taxon>Bacteria</taxon>
        <taxon>Bacillati</taxon>
        <taxon>Bacillota</taxon>
        <taxon>Bacilli</taxon>
        <taxon>Bacillales</taxon>
        <taxon>Bacillaceae</taxon>
        <taxon>Bacillus</taxon>
        <taxon>Bacillus cereus group</taxon>
    </lineage>
</organism>
<comment type="function">
    <text evidence="1">Catalyzes the transfer of a methyl group from 5-methyltetrahydrofolate to homocysteine resulting in methionine formation.</text>
</comment>
<comment type="catalytic activity">
    <reaction evidence="1">
        <text>5-methyltetrahydropteroyltri-L-glutamate + L-homocysteine = tetrahydropteroyltri-L-glutamate + L-methionine</text>
        <dbReference type="Rhea" id="RHEA:21196"/>
        <dbReference type="ChEBI" id="CHEBI:57844"/>
        <dbReference type="ChEBI" id="CHEBI:58140"/>
        <dbReference type="ChEBI" id="CHEBI:58199"/>
        <dbReference type="ChEBI" id="CHEBI:58207"/>
        <dbReference type="EC" id="2.1.1.14"/>
    </reaction>
</comment>
<comment type="cofactor">
    <cofactor evidence="1">
        <name>Zn(2+)</name>
        <dbReference type="ChEBI" id="CHEBI:29105"/>
    </cofactor>
    <text evidence="1">Binds 1 zinc ion per subunit.</text>
</comment>
<comment type="pathway">
    <text evidence="1">Amino-acid biosynthesis; L-methionine biosynthesis via de novo pathway; L-methionine from L-homocysteine (MetE route): step 1/1.</text>
</comment>
<comment type="similarity">
    <text evidence="1">Belongs to the vitamin-B12 independent methionine synthase family.</text>
</comment>
<dbReference type="EC" id="2.1.1.14" evidence="1"/>
<dbReference type="EMBL" id="AE017355">
    <property type="protein sequence ID" value="AAT60692.1"/>
    <property type="molecule type" value="Genomic_DNA"/>
</dbReference>
<dbReference type="RefSeq" id="WP_001007629.1">
    <property type="nucleotide sequence ID" value="NC_005957.1"/>
</dbReference>
<dbReference type="RefSeq" id="YP_038063.1">
    <property type="nucleotide sequence ID" value="NC_005957.1"/>
</dbReference>
<dbReference type="SMR" id="Q6HEG3"/>
<dbReference type="KEGG" id="btk:BT9727_3744"/>
<dbReference type="PATRIC" id="fig|281309.8.peg.3989"/>
<dbReference type="HOGENOM" id="CLU_013175_0_0_9"/>
<dbReference type="UniPathway" id="UPA00051">
    <property type="reaction ID" value="UER00082"/>
</dbReference>
<dbReference type="Proteomes" id="UP000001301">
    <property type="component" value="Chromosome"/>
</dbReference>
<dbReference type="GO" id="GO:0003871">
    <property type="term" value="F:5-methyltetrahydropteroyltriglutamate-homocysteine S-methyltransferase activity"/>
    <property type="evidence" value="ECO:0007669"/>
    <property type="project" value="UniProtKB-UniRule"/>
</dbReference>
<dbReference type="GO" id="GO:0008270">
    <property type="term" value="F:zinc ion binding"/>
    <property type="evidence" value="ECO:0007669"/>
    <property type="project" value="InterPro"/>
</dbReference>
<dbReference type="GO" id="GO:0009086">
    <property type="term" value="P:methionine biosynthetic process"/>
    <property type="evidence" value="ECO:0007669"/>
    <property type="project" value="UniProtKB-UniRule"/>
</dbReference>
<dbReference type="GO" id="GO:0032259">
    <property type="term" value="P:methylation"/>
    <property type="evidence" value="ECO:0007669"/>
    <property type="project" value="UniProtKB-KW"/>
</dbReference>
<dbReference type="CDD" id="cd03311">
    <property type="entry name" value="CIMS_C_terminal_like"/>
    <property type="match status" value="1"/>
</dbReference>
<dbReference type="CDD" id="cd03312">
    <property type="entry name" value="CIMS_N_terminal_like"/>
    <property type="match status" value="1"/>
</dbReference>
<dbReference type="Gene3D" id="3.20.20.210">
    <property type="match status" value="2"/>
</dbReference>
<dbReference type="HAMAP" id="MF_00172">
    <property type="entry name" value="Meth_synth"/>
    <property type="match status" value="1"/>
</dbReference>
<dbReference type="InterPro" id="IPR013215">
    <property type="entry name" value="Cbl-indep_Met_Synth_N"/>
</dbReference>
<dbReference type="InterPro" id="IPR006276">
    <property type="entry name" value="Cobalamin-indep_Met_synthase"/>
</dbReference>
<dbReference type="InterPro" id="IPR002629">
    <property type="entry name" value="Met_Synth_C/arc"/>
</dbReference>
<dbReference type="InterPro" id="IPR038071">
    <property type="entry name" value="UROD/MetE-like_sf"/>
</dbReference>
<dbReference type="NCBIfam" id="TIGR01371">
    <property type="entry name" value="met_syn_B12ind"/>
    <property type="match status" value="1"/>
</dbReference>
<dbReference type="NCBIfam" id="NF003556">
    <property type="entry name" value="PRK05222.1"/>
    <property type="match status" value="1"/>
</dbReference>
<dbReference type="PANTHER" id="PTHR30519">
    <property type="entry name" value="5-METHYLTETRAHYDROPTEROYLTRIGLUTAMATE--HOMOCYSTEINE METHYLTRANSFERASE"/>
    <property type="match status" value="1"/>
</dbReference>
<dbReference type="Pfam" id="PF08267">
    <property type="entry name" value="Meth_synt_1"/>
    <property type="match status" value="1"/>
</dbReference>
<dbReference type="Pfam" id="PF01717">
    <property type="entry name" value="Meth_synt_2"/>
    <property type="match status" value="1"/>
</dbReference>
<dbReference type="PIRSF" id="PIRSF000382">
    <property type="entry name" value="MeTrfase_B12_ind"/>
    <property type="match status" value="1"/>
</dbReference>
<dbReference type="SUPFAM" id="SSF51726">
    <property type="entry name" value="UROD/MetE-like"/>
    <property type="match status" value="2"/>
</dbReference>
<keyword id="KW-0028">Amino-acid biosynthesis</keyword>
<keyword id="KW-0479">Metal-binding</keyword>
<keyword id="KW-0486">Methionine biosynthesis</keyword>
<keyword id="KW-0489">Methyltransferase</keyword>
<keyword id="KW-0677">Repeat</keyword>
<keyword id="KW-0808">Transferase</keyword>
<keyword id="KW-0862">Zinc</keyword>
<evidence type="ECO:0000255" key="1">
    <source>
        <dbReference type="HAMAP-Rule" id="MF_00172"/>
    </source>
</evidence>
<accession>Q6HEG3</accession>
<proteinExistence type="inferred from homology"/>
<reference key="1">
    <citation type="journal article" date="2006" name="J. Bacteriol.">
        <title>Pathogenomic sequence analysis of Bacillus cereus and Bacillus thuringiensis isolates closely related to Bacillus anthracis.</title>
        <authorList>
            <person name="Han C.S."/>
            <person name="Xie G."/>
            <person name="Challacombe J.F."/>
            <person name="Altherr M.R."/>
            <person name="Bhotika S.S."/>
            <person name="Bruce D."/>
            <person name="Campbell C.S."/>
            <person name="Campbell M.L."/>
            <person name="Chen J."/>
            <person name="Chertkov O."/>
            <person name="Cleland C."/>
            <person name="Dimitrijevic M."/>
            <person name="Doggett N.A."/>
            <person name="Fawcett J.J."/>
            <person name="Glavina T."/>
            <person name="Goodwin L.A."/>
            <person name="Hill K.K."/>
            <person name="Hitchcock P."/>
            <person name="Jackson P.J."/>
            <person name="Keim P."/>
            <person name="Kewalramani A.R."/>
            <person name="Longmire J."/>
            <person name="Lucas S."/>
            <person name="Malfatti S."/>
            <person name="McMurry K."/>
            <person name="Meincke L.J."/>
            <person name="Misra M."/>
            <person name="Moseman B.L."/>
            <person name="Mundt M."/>
            <person name="Munk A.C."/>
            <person name="Okinaka R.T."/>
            <person name="Parson-Quintana B."/>
            <person name="Reilly L.P."/>
            <person name="Richardson P."/>
            <person name="Robinson D.L."/>
            <person name="Rubin E."/>
            <person name="Saunders E."/>
            <person name="Tapia R."/>
            <person name="Tesmer J.G."/>
            <person name="Thayer N."/>
            <person name="Thompson L.S."/>
            <person name="Tice H."/>
            <person name="Ticknor L.O."/>
            <person name="Wills P.L."/>
            <person name="Brettin T.S."/>
            <person name="Gilna P."/>
        </authorList>
    </citation>
    <scope>NUCLEOTIDE SEQUENCE [LARGE SCALE GENOMIC DNA]</scope>
    <source>
        <strain>97-27</strain>
    </source>
</reference>
<protein>
    <recommendedName>
        <fullName evidence="1">5-methyltetrahydropteroyltriglutamate--homocysteine methyltransferase</fullName>
        <ecNumber evidence="1">2.1.1.14</ecNumber>
    </recommendedName>
    <alternativeName>
        <fullName evidence="1">Cobalamin-independent methionine synthase</fullName>
    </alternativeName>
    <alternativeName>
        <fullName evidence="1">Methionine synthase, vitamin-B12 independent isozyme</fullName>
    </alternativeName>
</protein>
<name>METE_BACHK</name>